<protein>
    <recommendedName>
        <fullName evidence="1">Serine--tRNA ligase</fullName>
        <ecNumber evidence="1">6.1.1.11</ecNumber>
    </recommendedName>
    <alternativeName>
        <fullName evidence="1">Seryl-tRNA synthetase</fullName>
        <shortName evidence="1">SerRS</shortName>
    </alternativeName>
    <alternativeName>
        <fullName evidence="1">Seryl-tRNA(Ser/Sec) synthetase</fullName>
    </alternativeName>
</protein>
<organism>
    <name type="scientific">Xylella fastidiosa (strain 9a5c)</name>
    <dbReference type="NCBI Taxonomy" id="160492"/>
    <lineage>
        <taxon>Bacteria</taxon>
        <taxon>Pseudomonadati</taxon>
        <taxon>Pseudomonadota</taxon>
        <taxon>Gammaproteobacteria</taxon>
        <taxon>Lysobacterales</taxon>
        <taxon>Lysobacteraceae</taxon>
        <taxon>Xylella</taxon>
    </lineage>
</organism>
<dbReference type="EC" id="6.1.1.11" evidence="1"/>
<dbReference type="EMBL" id="AE003849">
    <property type="protein sequence ID" value="AAF85085.1"/>
    <property type="status" value="ALT_INIT"/>
    <property type="molecule type" value="Genomic_DNA"/>
</dbReference>
<dbReference type="PIR" id="E82577">
    <property type="entry name" value="E82577"/>
</dbReference>
<dbReference type="RefSeq" id="WP_010894734.1">
    <property type="nucleotide sequence ID" value="NC_002488.3"/>
</dbReference>
<dbReference type="SMR" id="Q9PB58"/>
<dbReference type="STRING" id="160492.XF_2286"/>
<dbReference type="KEGG" id="xfa:XF_2286"/>
<dbReference type="eggNOG" id="COG0172">
    <property type="taxonomic scope" value="Bacteria"/>
</dbReference>
<dbReference type="HOGENOM" id="CLU_023797_1_1_6"/>
<dbReference type="UniPathway" id="UPA00906">
    <property type="reaction ID" value="UER00895"/>
</dbReference>
<dbReference type="Proteomes" id="UP000000812">
    <property type="component" value="Chromosome"/>
</dbReference>
<dbReference type="GO" id="GO:0005737">
    <property type="term" value="C:cytoplasm"/>
    <property type="evidence" value="ECO:0007669"/>
    <property type="project" value="UniProtKB-SubCell"/>
</dbReference>
<dbReference type="GO" id="GO:0005524">
    <property type="term" value="F:ATP binding"/>
    <property type="evidence" value="ECO:0007669"/>
    <property type="project" value="UniProtKB-UniRule"/>
</dbReference>
<dbReference type="GO" id="GO:0004828">
    <property type="term" value="F:serine-tRNA ligase activity"/>
    <property type="evidence" value="ECO:0007669"/>
    <property type="project" value="UniProtKB-UniRule"/>
</dbReference>
<dbReference type="GO" id="GO:0016260">
    <property type="term" value="P:selenocysteine biosynthetic process"/>
    <property type="evidence" value="ECO:0007669"/>
    <property type="project" value="UniProtKB-UniRule"/>
</dbReference>
<dbReference type="GO" id="GO:0006434">
    <property type="term" value="P:seryl-tRNA aminoacylation"/>
    <property type="evidence" value="ECO:0007669"/>
    <property type="project" value="UniProtKB-UniRule"/>
</dbReference>
<dbReference type="CDD" id="cd00770">
    <property type="entry name" value="SerRS_core"/>
    <property type="match status" value="1"/>
</dbReference>
<dbReference type="Gene3D" id="3.30.930.10">
    <property type="entry name" value="Bira Bifunctional Protein, Domain 2"/>
    <property type="match status" value="1"/>
</dbReference>
<dbReference type="Gene3D" id="1.10.287.40">
    <property type="entry name" value="Serine-tRNA synthetase, tRNA binding domain"/>
    <property type="match status" value="1"/>
</dbReference>
<dbReference type="HAMAP" id="MF_00176">
    <property type="entry name" value="Ser_tRNA_synth_type1"/>
    <property type="match status" value="1"/>
</dbReference>
<dbReference type="InterPro" id="IPR002314">
    <property type="entry name" value="aa-tRNA-synt_IIb"/>
</dbReference>
<dbReference type="InterPro" id="IPR006195">
    <property type="entry name" value="aa-tRNA-synth_II"/>
</dbReference>
<dbReference type="InterPro" id="IPR045864">
    <property type="entry name" value="aa-tRNA-synth_II/BPL/LPL"/>
</dbReference>
<dbReference type="InterPro" id="IPR002317">
    <property type="entry name" value="Ser-tRNA-ligase_type_1"/>
</dbReference>
<dbReference type="InterPro" id="IPR015866">
    <property type="entry name" value="Ser-tRNA-synth_1_N"/>
</dbReference>
<dbReference type="InterPro" id="IPR042103">
    <property type="entry name" value="SerRS_1_N_sf"/>
</dbReference>
<dbReference type="InterPro" id="IPR033729">
    <property type="entry name" value="SerRS_core"/>
</dbReference>
<dbReference type="InterPro" id="IPR010978">
    <property type="entry name" value="tRNA-bd_arm"/>
</dbReference>
<dbReference type="NCBIfam" id="TIGR00414">
    <property type="entry name" value="serS"/>
    <property type="match status" value="1"/>
</dbReference>
<dbReference type="PANTHER" id="PTHR43697:SF1">
    <property type="entry name" value="SERINE--TRNA LIGASE"/>
    <property type="match status" value="1"/>
</dbReference>
<dbReference type="PANTHER" id="PTHR43697">
    <property type="entry name" value="SERYL-TRNA SYNTHETASE"/>
    <property type="match status" value="1"/>
</dbReference>
<dbReference type="Pfam" id="PF02403">
    <property type="entry name" value="Seryl_tRNA_N"/>
    <property type="match status" value="1"/>
</dbReference>
<dbReference type="Pfam" id="PF00587">
    <property type="entry name" value="tRNA-synt_2b"/>
    <property type="match status" value="1"/>
</dbReference>
<dbReference type="PIRSF" id="PIRSF001529">
    <property type="entry name" value="Ser-tRNA-synth_IIa"/>
    <property type="match status" value="1"/>
</dbReference>
<dbReference type="PRINTS" id="PR00981">
    <property type="entry name" value="TRNASYNTHSER"/>
</dbReference>
<dbReference type="SUPFAM" id="SSF55681">
    <property type="entry name" value="Class II aaRS and biotin synthetases"/>
    <property type="match status" value="1"/>
</dbReference>
<dbReference type="SUPFAM" id="SSF46589">
    <property type="entry name" value="tRNA-binding arm"/>
    <property type="match status" value="1"/>
</dbReference>
<dbReference type="PROSITE" id="PS50862">
    <property type="entry name" value="AA_TRNA_LIGASE_II"/>
    <property type="match status" value="1"/>
</dbReference>
<accession>Q9PB58</accession>
<reference key="1">
    <citation type="journal article" date="2000" name="Nature">
        <title>The genome sequence of the plant pathogen Xylella fastidiosa.</title>
        <authorList>
            <person name="Simpson A.J.G."/>
            <person name="Reinach F.C."/>
            <person name="Arruda P."/>
            <person name="Abreu F.A."/>
            <person name="Acencio M."/>
            <person name="Alvarenga R."/>
            <person name="Alves L.M.C."/>
            <person name="Araya J.E."/>
            <person name="Baia G.S."/>
            <person name="Baptista C.S."/>
            <person name="Barros M.H."/>
            <person name="Bonaccorsi E.D."/>
            <person name="Bordin S."/>
            <person name="Bove J.M."/>
            <person name="Briones M.R.S."/>
            <person name="Bueno M.R.P."/>
            <person name="Camargo A.A."/>
            <person name="Camargo L.E.A."/>
            <person name="Carraro D.M."/>
            <person name="Carrer H."/>
            <person name="Colauto N.B."/>
            <person name="Colombo C."/>
            <person name="Costa F.F."/>
            <person name="Costa M.C.R."/>
            <person name="Costa-Neto C.M."/>
            <person name="Coutinho L.L."/>
            <person name="Cristofani M."/>
            <person name="Dias-Neto E."/>
            <person name="Docena C."/>
            <person name="El-Dorry H."/>
            <person name="Facincani A.P."/>
            <person name="Ferreira A.J.S."/>
            <person name="Ferreira V.C.A."/>
            <person name="Ferro J.A."/>
            <person name="Fraga J.S."/>
            <person name="Franca S.C."/>
            <person name="Franco M.C."/>
            <person name="Frohme M."/>
            <person name="Furlan L.R."/>
            <person name="Garnier M."/>
            <person name="Goldman G.H."/>
            <person name="Goldman M.H.S."/>
            <person name="Gomes S.L."/>
            <person name="Gruber A."/>
            <person name="Ho P.L."/>
            <person name="Hoheisel J.D."/>
            <person name="Junqueira M.L."/>
            <person name="Kemper E.L."/>
            <person name="Kitajima J.P."/>
            <person name="Krieger J.E."/>
            <person name="Kuramae E.E."/>
            <person name="Laigret F."/>
            <person name="Lambais M.R."/>
            <person name="Leite L.C.C."/>
            <person name="Lemos E.G.M."/>
            <person name="Lemos M.V.F."/>
            <person name="Lopes S.A."/>
            <person name="Lopes C.R."/>
            <person name="Machado J.A."/>
            <person name="Machado M.A."/>
            <person name="Madeira A.M.B.N."/>
            <person name="Madeira H.M.F."/>
            <person name="Marino C.L."/>
            <person name="Marques M.V."/>
            <person name="Martins E.A.L."/>
            <person name="Martins E.M.F."/>
            <person name="Matsukuma A.Y."/>
            <person name="Menck C.F.M."/>
            <person name="Miracca E.C."/>
            <person name="Miyaki C.Y."/>
            <person name="Monteiro-Vitorello C.B."/>
            <person name="Moon D.H."/>
            <person name="Nagai M.A."/>
            <person name="Nascimento A.L.T.O."/>
            <person name="Netto L.E.S."/>
            <person name="Nhani A. Jr."/>
            <person name="Nobrega F.G."/>
            <person name="Nunes L.R."/>
            <person name="Oliveira M.A."/>
            <person name="de Oliveira M.C."/>
            <person name="de Oliveira R.C."/>
            <person name="Palmieri D.A."/>
            <person name="Paris A."/>
            <person name="Peixoto B.R."/>
            <person name="Pereira G.A.G."/>
            <person name="Pereira H.A. Jr."/>
            <person name="Pesquero J.B."/>
            <person name="Quaggio R.B."/>
            <person name="Roberto P.G."/>
            <person name="Rodrigues V."/>
            <person name="de Rosa A.J.M."/>
            <person name="de Rosa V.E. Jr."/>
            <person name="de Sa R.G."/>
            <person name="Santelli R.V."/>
            <person name="Sawasaki H.E."/>
            <person name="da Silva A.C.R."/>
            <person name="da Silva A.M."/>
            <person name="da Silva F.R."/>
            <person name="Silva W.A. Jr."/>
            <person name="da Silveira J.F."/>
            <person name="Silvestri M.L.Z."/>
            <person name="Siqueira W.J."/>
            <person name="de Souza A.A."/>
            <person name="de Souza A.P."/>
            <person name="Terenzi M.F."/>
            <person name="Truffi D."/>
            <person name="Tsai S.M."/>
            <person name="Tsuhako M.H."/>
            <person name="Vallada H."/>
            <person name="Van Sluys M.A."/>
            <person name="Verjovski-Almeida S."/>
            <person name="Vettore A.L."/>
            <person name="Zago M.A."/>
            <person name="Zatz M."/>
            <person name="Meidanis J."/>
            <person name="Setubal J.C."/>
        </authorList>
    </citation>
    <scope>NUCLEOTIDE SEQUENCE [LARGE SCALE GENOMIC DNA]</scope>
    <source>
        <strain>9a5c</strain>
    </source>
</reference>
<name>SYS_XYLFA</name>
<proteinExistence type="inferred from homology"/>
<evidence type="ECO:0000255" key="1">
    <source>
        <dbReference type="HAMAP-Rule" id="MF_00176"/>
    </source>
</evidence>
<evidence type="ECO:0000305" key="2"/>
<sequence>MLDPTLLRQQLAKLAECLSTVRGFTLDVAALEALESERKRIQVHTQELQSLRNSKSKAIGQARSKGEDVSSLMAEVAAFSDDLKASEIALEEIRTELEKVALGIPNLPQQDVPLGADERDNVEQARWGVPRTFDFSIKDHVELGACHGWLDAESAAKLSGARFTVLRGPIARLHRALAQCMLDLHVRQHGYEEVNVPIIVNADSLYGTGQLPKFEEDMFSTQLGEHRRYLISTSEISLTNLVRNEIIEADRLPLRMAAHSLCFRSEAGSGGRDTRGMIRQHQFEKVELVSVCKPQESEGEHQRMTRCAETVLEMLGLPYRKILLCTGDMGFAATKTYDLEVWLPSQGMYREISSCSNCGDFQARRMQARWRNSVTGKPELVHTLNGSGVAVGRAMIAVMENYQNADGSITVPEVLRPYMDGLSRIG</sequence>
<keyword id="KW-0030">Aminoacyl-tRNA synthetase</keyword>
<keyword id="KW-0067">ATP-binding</keyword>
<keyword id="KW-0963">Cytoplasm</keyword>
<keyword id="KW-0436">Ligase</keyword>
<keyword id="KW-0547">Nucleotide-binding</keyword>
<keyword id="KW-0648">Protein biosynthesis</keyword>
<comment type="function">
    <text evidence="1">Catalyzes the attachment of serine to tRNA(Ser). Is also able to aminoacylate tRNA(Sec) with serine, to form the misacylated tRNA L-seryl-tRNA(Sec), which will be further converted into selenocysteinyl-tRNA(Sec).</text>
</comment>
<comment type="catalytic activity">
    <reaction evidence="1">
        <text>tRNA(Ser) + L-serine + ATP = L-seryl-tRNA(Ser) + AMP + diphosphate + H(+)</text>
        <dbReference type="Rhea" id="RHEA:12292"/>
        <dbReference type="Rhea" id="RHEA-COMP:9669"/>
        <dbReference type="Rhea" id="RHEA-COMP:9703"/>
        <dbReference type="ChEBI" id="CHEBI:15378"/>
        <dbReference type="ChEBI" id="CHEBI:30616"/>
        <dbReference type="ChEBI" id="CHEBI:33019"/>
        <dbReference type="ChEBI" id="CHEBI:33384"/>
        <dbReference type="ChEBI" id="CHEBI:78442"/>
        <dbReference type="ChEBI" id="CHEBI:78533"/>
        <dbReference type="ChEBI" id="CHEBI:456215"/>
        <dbReference type="EC" id="6.1.1.11"/>
    </reaction>
</comment>
<comment type="catalytic activity">
    <reaction evidence="1">
        <text>tRNA(Sec) + L-serine + ATP = L-seryl-tRNA(Sec) + AMP + diphosphate + H(+)</text>
        <dbReference type="Rhea" id="RHEA:42580"/>
        <dbReference type="Rhea" id="RHEA-COMP:9742"/>
        <dbReference type="Rhea" id="RHEA-COMP:10128"/>
        <dbReference type="ChEBI" id="CHEBI:15378"/>
        <dbReference type="ChEBI" id="CHEBI:30616"/>
        <dbReference type="ChEBI" id="CHEBI:33019"/>
        <dbReference type="ChEBI" id="CHEBI:33384"/>
        <dbReference type="ChEBI" id="CHEBI:78442"/>
        <dbReference type="ChEBI" id="CHEBI:78533"/>
        <dbReference type="ChEBI" id="CHEBI:456215"/>
        <dbReference type="EC" id="6.1.1.11"/>
    </reaction>
</comment>
<comment type="pathway">
    <text evidence="1">Aminoacyl-tRNA biosynthesis; selenocysteinyl-tRNA(Sec) biosynthesis; L-seryl-tRNA(Sec) from L-serine and tRNA(Sec): step 1/1.</text>
</comment>
<comment type="subunit">
    <text evidence="1">Homodimer. The tRNA molecule binds across the dimer.</text>
</comment>
<comment type="subcellular location">
    <subcellularLocation>
        <location evidence="1">Cytoplasm</location>
    </subcellularLocation>
</comment>
<comment type="domain">
    <text evidence="1">Consists of two distinct domains, a catalytic core and a N-terminal extension that is involved in tRNA binding.</text>
</comment>
<comment type="similarity">
    <text evidence="1">Belongs to the class-II aminoacyl-tRNA synthetase family. Type-1 seryl-tRNA synthetase subfamily.</text>
</comment>
<comment type="sequence caution" evidence="2">
    <conflict type="erroneous initiation">
        <sequence resource="EMBL-CDS" id="AAF85085"/>
    </conflict>
</comment>
<feature type="chain" id="PRO_0000122164" description="Serine--tRNA ligase">
    <location>
        <begin position="1"/>
        <end position="426"/>
    </location>
</feature>
<feature type="binding site" evidence="1">
    <location>
        <begin position="233"/>
        <end position="235"/>
    </location>
    <ligand>
        <name>L-serine</name>
        <dbReference type="ChEBI" id="CHEBI:33384"/>
    </ligand>
</feature>
<feature type="binding site" evidence="1">
    <location>
        <begin position="264"/>
        <end position="266"/>
    </location>
    <ligand>
        <name>ATP</name>
        <dbReference type="ChEBI" id="CHEBI:30616"/>
    </ligand>
</feature>
<feature type="binding site" evidence="1">
    <location>
        <position position="287"/>
    </location>
    <ligand>
        <name>L-serine</name>
        <dbReference type="ChEBI" id="CHEBI:33384"/>
    </ligand>
</feature>
<feature type="binding site" evidence="1">
    <location>
        <begin position="351"/>
        <end position="354"/>
    </location>
    <ligand>
        <name>ATP</name>
        <dbReference type="ChEBI" id="CHEBI:30616"/>
    </ligand>
</feature>
<feature type="binding site" evidence="1">
    <location>
        <position position="387"/>
    </location>
    <ligand>
        <name>L-serine</name>
        <dbReference type="ChEBI" id="CHEBI:33384"/>
    </ligand>
</feature>
<gene>
    <name evidence="1" type="primary">serS</name>
    <name type="ordered locus">XF_2286</name>
</gene>